<dbReference type="EMBL" id="CP001399">
    <property type="protein sequence ID" value="ACP35502.1"/>
    <property type="molecule type" value="Genomic_DNA"/>
</dbReference>
<dbReference type="RefSeq" id="WP_012711397.1">
    <property type="nucleotide sequence ID" value="NC_012589.1"/>
</dbReference>
<dbReference type="SMR" id="C3MQ39"/>
<dbReference type="KEGG" id="sis:LS215_1494"/>
<dbReference type="HOGENOM" id="CLU_080796_1_0_2"/>
<dbReference type="OrthoDB" id="8183at2157"/>
<dbReference type="Proteomes" id="UP000001747">
    <property type="component" value="Chromosome"/>
</dbReference>
<dbReference type="GO" id="GO:0022625">
    <property type="term" value="C:cytosolic large ribosomal subunit"/>
    <property type="evidence" value="ECO:0007669"/>
    <property type="project" value="TreeGrafter"/>
</dbReference>
<dbReference type="GO" id="GO:0003723">
    <property type="term" value="F:RNA binding"/>
    <property type="evidence" value="ECO:0007669"/>
    <property type="project" value="TreeGrafter"/>
</dbReference>
<dbReference type="GO" id="GO:0003735">
    <property type="term" value="F:structural constituent of ribosome"/>
    <property type="evidence" value="ECO:0007669"/>
    <property type="project" value="InterPro"/>
</dbReference>
<dbReference type="GO" id="GO:0002181">
    <property type="term" value="P:cytoplasmic translation"/>
    <property type="evidence" value="ECO:0007669"/>
    <property type="project" value="TreeGrafter"/>
</dbReference>
<dbReference type="FunFam" id="3.40.1120.10:FF:000002">
    <property type="entry name" value="50S ribosomal protein L15e"/>
    <property type="match status" value="1"/>
</dbReference>
<dbReference type="Gene3D" id="3.40.1120.10">
    <property type="entry name" value="Ribosomal protein l15e"/>
    <property type="match status" value="1"/>
</dbReference>
<dbReference type="HAMAP" id="MF_00256">
    <property type="entry name" value="Ribosomal_eL15"/>
    <property type="match status" value="1"/>
</dbReference>
<dbReference type="InterPro" id="IPR024794">
    <property type="entry name" value="Rbsml_eL15_core_dom_sf"/>
</dbReference>
<dbReference type="InterPro" id="IPR000439">
    <property type="entry name" value="Ribosomal_eL15"/>
</dbReference>
<dbReference type="InterPro" id="IPR020926">
    <property type="entry name" value="Ribosomal_eL15_arc"/>
</dbReference>
<dbReference type="InterPro" id="IPR020925">
    <property type="entry name" value="Ribosomal_eL15_CS"/>
</dbReference>
<dbReference type="InterPro" id="IPR012678">
    <property type="entry name" value="Ribosomal_uL23/eL15/eS24_sf"/>
</dbReference>
<dbReference type="NCBIfam" id="NF003269">
    <property type="entry name" value="PRK04243.1"/>
    <property type="match status" value="1"/>
</dbReference>
<dbReference type="PANTHER" id="PTHR11847:SF4">
    <property type="entry name" value="LARGE RIBOSOMAL SUBUNIT PROTEIN EL15"/>
    <property type="match status" value="1"/>
</dbReference>
<dbReference type="PANTHER" id="PTHR11847">
    <property type="entry name" value="RIBOSOMAL PROTEIN L15"/>
    <property type="match status" value="1"/>
</dbReference>
<dbReference type="Pfam" id="PF00827">
    <property type="entry name" value="Ribosomal_L15e"/>
    <property type="match status" value="1"/>
</dbReference>
<dbReference type="SMART" id="SM01384">
    <property type="entry name" value="Ribosomal_L15e"/>
    <property type="match status" value="1"/>
</dbReference>
<dbReference type="SUPFAM" id="SSF54189">
    <property type="entry name" value="Ribosomal proteins S24e, L23 and L15e"/>
    <property type="match status" value="1"/>
</dbReference>
<dbReference type="PROSITE" id="PS01194">
    <property type="entry name" value="RIBOSOMAL_L15E"/>
    <property type="match status" value="1"/>
</dbReference>
<sequence length="216" mass="25677">MTLSVYHYIENTWNSEEWKKGVLRQRFIEWRKEPSIVRLAKPTRLNRARSLGYKAKQGFVIVRVRVRRGGLNKPRPNKGRRPKRMGVYGYGPAKGYKWIAEERAARKYPNLEVLGSYYVGEDGLYKYYEIIMVDPSHPVIKNDPNYKWLQDPSNRNRVFRGLTSAGKKARGLRKSKGFKGTVKHKWSRKQKEREEKKRHEASKYYRLQRYDKIPGK</sequence>
<accession>C3MQ39</accession>
<reference key="1">
    <citation type="journal article" date="2009" name="Proc. Natl. Acad. Sci. U.S.A.">
        <title>Biogeography of the Sulfolobus islandicus pan-genome.</title>
        <authorList>
            <person name="Reno M.L."/>
            <person name="Held N.L."/>
            <person name="Fields C.J."/>
            <person name="Burke P.V."/>
            <person name="Whitaker R.J."/>
        </authorList>
    </citation>
    <scope>NUCLEOTIDE SEQUENCE [LARGE SCALE GENOMIC DNA]</scope>
    <source>
        <strain>L.S.2.15 / Lassen #1</strain>
    </source>
</reference>
<organism>
    <name type="scientific">Saccharolobus islandicus (strain L.S.2.15 / Lassen #1)</name>
    <name type="common">Sulfolobus islandicus</name>
    <dbReference type="NCBI Taxonomy" id="429572"/>
    <lineage>
        <taxon>Archaea</taxon>
        <taxon>Thermoproteota</taxon>
        <taxon>Thermoprotei</taxon>
        <taxon>Sulfolobales</taxon>
        <taxon>Sulfolobaceae</taxon>
        <taxon>Saccharolobus</taxon>
    </lineage>
</organism>
<gene>
    <name evidence="1" type="primary">rpl15e</name>
    <name type="ordered locus">LS215_1494</name>
</gene>
<evidence type="ECO:0000255" key="1">
    <source>
        <dbReference type="HAMAP-Rule" id="MF_00256"/>
    </source>
</evidence>
<evidence type="ECO:0000256" key="2">
    <source>
        <dbReference type="SAM" id="MobiDB-lite"/>
    </source>
</evidence>
<evidence type="ECO:0000305" key="3"/>
<comment type="similarity">
    <text evidence="1">Belongs to the eukaryotic ribosomal protein eL15 family.</text>
</comment>
<proteinExistence type="inferred from homology"/>
<keyword id="KW-0687">Ribonucleoprotein</keyword>
<keyword id="KW-0689">Ribosomal protein</keyword>
<name>RL15E_SACI2</name>
<feature type="chain" id="PRO_1000204616" description="Large ribosomal subunit protein eL15">
    <location>
        <begin position="1"/>
        <end position="216"/>
    </location>
</feature>
<feature type="region of interest" description="Disordered" evidence="2">
    <location>
        <begin position="170"/>
        <end position="201"/>
    </location>
</feature>
<feature type="compositionally biased region" description="Basic residues" evidence="2">
    <location>
        <begin position="170"/>
        <end position="188"/>
    </location>
</feature>
<feature type="compositionally biased region" description="Basic and acidic residues" evidence="2">
    <location>
        <begin position="189"/>
        <end position="201"/>
    </location>
</feature>
<protein>
    <recommendedName>
        <fullName evidence="1">Large ribosomal subunit protein eL15</fullName>
    </recommendedName>
    <alternativeName>
        <fullName evidence="3">50S ribosomal protein L15e</fullName>
    </alternativeName>
</protein>